<protein>
    <recommendedName>
        <fullName>Little elongation complex subunit 1</fullName>
    </recommendedName>
    <alternativeName>
        <fullName>Interactor of little elongator complex ELL subunit 1</fullName>
    </alternativeName>
</protein>
<proteinExistence type="evidence at protein level"/>
<name>ICE1_MOUSE</name>
<accession>E9Q286</accession>
<accession>Q6ZQ20</accession>
<feature type="chain" id="PRO_0000430423" description="Little elongation complex subunit 1">
    <location>
        <begin position="1"/>
        <end position="2241"/>
    </location>
</feature>
<feature type="region of interest" description="Disordered" evidence="4">
    <location>
        <begin position="222"/>
        <end position="255"/>
    </location>
</feature>
<feature type="region of interest" description="Disordered" evidence="4">
    <location>
        <begin position="273"/>
        <end position="315"/>
    </location>
</feature>
<feature type="region of interest" description="Disordered" evidence="4">
    <location>
        <begin position="368"/>
        <end position="387"/>
    </location>
</feature>
<feature type="region of interest" description="Disordered" evidence="4">
    <location>
        <begin position="552"/>
        <end position="590"/>
    </location>
</feature>
<feature type="region of interest" description="Disordered" evidence="4">
    <location>
        <begin position="703"/>
        <end position="817"/>
    </location>
</feature>
<feature type="region of interest" description="Disordered" evidence="4">
    <location>
        <begin position="971"/>
        <end position="1119"/>
    </location>
</feature>
<feature type="region of interest" description="Disordered" evidence="4">
    <location>
        <begin position="1231"/>
        <end position="1328"/>
    </location>
</feature>
<feature type="region of interest" description="Disordered" evidence="4">
    <location>
        <begin position="1419"/>
        <end position="1475"/>
    </location>
</feature>
<feature type="region of interest" description="Disordered" evidence="4">
    <location>
        <begin position="1543"/>
        <end position="1671"/>
    </location>
</feature>
<feature type="region of interest" description="Disordered" evidence="4">
    <location>
        <begin position="1777"/>
        <end position="1800"/>
    </location>
</feature>
<feature type="region of interest" description="Disordered" evidence="4">
    <location>
        <begin position="1812"/>
        <end position="1843"/>
    </location>
</feature>
<feature type="coiled-coil region" evidence="3">
    <location>
        <begin position="22"/>
        <end position="185"/>
    </location>
</feature>
<feature type="compositionally biased region" description="Basic and acidic residues" evidence="4">
    <location>
        <begin position="222"/>
        <end position="233"/>
    </location>
</feature>
<feature type="compositionally biased region" description="Basic and acidic residues" evidence="4">
    <location>
        <begin position="296"/>
        <end position="315"/>
    </location>
</feature>
<feature type="compositionally biased region" description="Polar residues" evidence="4">
    <location>
        <begin position="559"/>
        <end position="569"/>
    </location>
</feature>
<feature type="compositionally biased region" description="Gly residues" evidence="4">
    <location>
        <begin position="718"/>
        <end position="728"/>
    </location>
</feature>
<feature type="compositionally biased region" description="Polar residues" evidence="4">
    <location>
        <begin position="738"/>
        <end position="760"/>
    </location>
</feature>
<feature type="compositionally biased region" description="Acidic residues" evidence="4">
    <location>
        <begin position="1065"/>
        <end position="1074"/>
    </location>
</feature>
<feature type="compositionally biased region" description="Basic and acidic residues" evidence="4">
    <location>
        <begin position="1091"/>
        <end position="1104"/>
    </location>
</feature>
<feature type="compositionally biased region" description="Basic and acidic residues" evidence="4">
    <location>
        <begin position="1252"/>
        <end position="1266"/>
    </location>
</feature>
<feature type="compositionally biased region" description="Polar residues" evidence="4">
    <location>
        <begin position="1460"/>
        <end position="1470"/>
    </location>
</feature>
<feature type="compositionally biased region" description="Polar residues" evidence="4">
    <location>
        <begin position="1574"/>
        <end position="1585"/>
    </location>
</feature>
<feature type="compositionally biased region" description="Pro residues" evidence="4">
    <location>
        <begin position="1595"/>
        <end position="1606"/>
    </location>
</feature>
<feature type="compositionally biased region" description="Polar residues" evidence="4">
    <location>
        <begin position="1781"/>
        <end position="1794"/>
    </location>
</feature>
<feature type="compositionally biased region" description="Basic and acidic residues" evidence="4">
    <location>
        <begin position="1814"/>
        <end position="1829"/>
    </location>
</feature>
<feature type="modified residue" description="Phosphoserine" evidence="2">
    <location>
        <position position="523"/>
    </location>
</feature>
<feature type="modified residue" description="Phosphoserine" evidence="6">
    <location>
        <position position="676"/>
    </location>
</feature>
<feature type="modified residue" description="Phosphothreonine" evidence="2">
    <location>
        <position position="803"/>
    </location>
</feature>
<feature type="modified residue" description="Phosphoserine" evidence="2">
    <location>
        <position position="896"/>
    </location>
</feature>
<feature type="modified residue" description="N6-acetyllysine" evidence="2">
    <location>
        <position position="1189"/>
    </location>
</feature>
<feature type="modified residue" description="Phosphoserine" evidence="2">
    <location>
        <position position="1553"/>
    </location>
</feature>
<feature type="modified residue" description="Phosphoserine" evidence="6">
    <location>
        <position position="1582"/>
    </location>
</feature>
<feature type="modified residue" description="Phosphothreonine" evidence="6">
    <location>
        <position position="1607"/>
    </location>
</feature>
<feature type="modified residue" description="Phosphoserine" evidence="2">
    <location>
        <position position="1657"/>
    </location>
</feature>
<feature type="modified residue" description="Phosphoserine" evidence="2">
    <location>
        <position position="1662"/>
    </location>
</feature>
<feature type="modified residue" description="Phosphoserine" evidence="2">
    <location>
        <position position="1664"/>
    </location>
</feature>
<feature type="modified residue" description="Phosphoserine" evidence="2">
    <location>
        <position position="1666"/>
    </location>
</feature>
<feature type="modified residue" description="Phosphoserine" evidence="2">
    <location>
        <position position="1677"/>
    </location>
</feature>
<feature type="modified residue" description="Phosphoserine" evidence="2">
    <location>
        <position position="1820"/>
    </location>
</feature>
<reference key="1">
    <citation type="journal article" date="2009" name="PLoS Biol.">
        <title>Lineage-specific biology revealed by a finished genome assembly of the mouse.</title>
        <authorList>
            <person name="Church D.M."/>
            <person name="Goodstadt L."/>
            <person name="Hillier L.W."/>
            <person name="Zody M.C."/>
            <person name="Goldstein S."/>
            <person name="She X."/>
            <person name="Bult C.J."/>
            <person name="Agarwala R."/>
            <person name="Cherry J.L."/>
            <person name="DiCuccio M."/>
            <person name="Hlavina W."/>
            <person name="Kapustin Y."/>
            <person name="Meric P."/>
            <person name="Maglott D."/>
            <person name="Birtle Z."/>
            <person name="Marques A.C."/>
            <person name="Graves T."/>
            <person name="Zhou S."/>
            <person name="Teague B."/>
            <person name="Potamousis K."/>
            <person name="Churas C."/>
            <person name="Place M."/>
            <person name="Herschleb J."/>
            <person name="Runnheim R."/>
            <person name="Forrest D."/>
            <person name="Amos-Landgraf J."/>
            <person name="Schwartz D.C."/>
            <person name="Cheng Z."/>
            <person name="Lindblad-Toh K."/>
            <person name="Eichler E.E."/>
            <person name="Ponting C.P."/>
        </authorList>
    </citation>
    <scope>NUCLEOTIDE SEQUENCE [LARGE SCALE GENOMIC DNA]</scope>
    <source>
        <strain>C57BL/6J</strain>
    </source>
</reference>
<reference key="2">
    <citation type="journal article" date="2003" name="DNA Res.">
        <title>Prediction of the coding sequences of mouse homologues of KIAA gene: III. The complete nucleotide sequences of 500 mouse KIAA-homologous cDNAs identified by screening of terminal sequences of cDNA clones randomly sampled from size-fractionated libraries.</title>
        <authorList>
            <person name="Okazaki N."/>
            <person name="Kikuno R."/>
            <person name="Ohara R."/>
            <person name="Inamoto S."/>
            <person name="Koseki H."/>
            <person name="Hiraoka S."/>
            <person name="Saga Y."/>
            <person name="Nagase T."/>
            <person name="Ohara O."/>
            <person name="Koga H."/>
        </authorList>
    </citation>
    <scope>NUCLEOTIDE SEQUENCE [LARGE SCALE MRNA] OF 510-2241</scope>
    <source>
        <tissue>Embryonic tail</tissue>
    </source>
</reference>
<reference key="3">
    <citation type="journal article" date="2010" name="Cell">
        <title>A tissue-specific atlas of mouse protein phosphorylation and expression.</title>
        <authorList>
            <person name="Huttlin E.L."/>
            <person name="Jedrychowski M.P."/>
            <person name="Elias J.E."/>
            <person name="Goswami T."/>
            <person name="Rad R."/>
            <person name="Beausoleil S.A."/>
            <person name="Villen J."/>
            <person name="Haas W."/>
            <person name="Sowa M.E."/>
            <person name="Gygi S.P."/>
        </authorList>
    </citation>
    <scope>PHOSPHORYLATION [LARGE SCALE ANALYSIS] AT SER-676; SER-1582 AND THR-1607</scope>
    <scope>IDENTIFICATION BY MASS SPECTROMETRY [LARGE SCALE ANALYSIS]</scope>
    <source>
        <tissue>Pancreas</tissue>
        <tissue>Spleen</tissue>
        <tissue>Testis</tissue>
    </source>
</reference>
<comment type="function">
    <text evidence="1">Component of the little elongation complex (LEC), a complex required to regulate small nuclear RNA (snRNA) gene transcription by RNA polymerase II and III. Specifically acts as a scaffold protein that promotes the LEC complex formation and recruitment and RNA polymerase II occupancy at snRNA genes in subnuclear bodies (By similarity).</text>
</comment>
<comment type="subunit">
    <text evidence="1">Component of the little elongation complex (LEC), at least composed of ELL (ELL, ELL2 or ELL3), ZC3H8, ICE1 and ICE2. Interacts (via N-terminus domain) with ELL. Interacts (via C-terminus domain) with ICE2 and ZC3H8 (By similarity).</text>
</comment>
<comment type="subcellular location">
    <subcellularLocation>
        <location evidence="2">Nucleus</location>
    </subcellularLocation>
    <subcellularLocation>
        <location evidence="2">Nucleus</location>
        <location evidence="2">Cajal body</location>
    </subcellularLocation>
    <text evidence="2">Colocalizes with COIL in subnuclear Cajal and histone locus bodies. Associates to transcriptionally active chromatin at snRNA genes.</text>
</comment>
<comment type="domain">
    <text evidence="1">The N-termimus domain is necessary and sufficient for its targeting to subnuclear cajal and histone locus bodies.</text>
</comment>
<comment type="similarity">
    <text evidence="5">Belongs to the ICE1 family.</text>
</comment>
<evidence type="ECO:0000250" key="1"/>
<evidence type="ECO:0000250" key="2">
    <source>
        <dbReference type="UniProtKB" id="Q9Y2F5"/>
    </source>
</evidence>
<evidence type="ECO:0000255" key="3"/>
<evidence type="ECO:0000256" key="4">
    <source>
        <dbReference type="SAM" id="MobiDB-lite"/>
    </source>
</evidence>
<evidence type="ECO:0000305" key="5"/>
<evidence type="ECO:0007744" key="6">
    <source>
    </source>
</evidence>
<gene>
    <name type="primary">Ice1</name>
    <name type="synonym">Kiaa0947</name>
</gene>
<dbReference type="EMBL" id="AC113508">
    <property type="status" value="NOT_ANNOTATED_CDS"/>
    <property type="molecule type" value="Genomic_DNA"/>
</dbReference>
<dbReference type="EMBL" id="AK129244">
    <property type="protein sequence ID" value="BAC98054.1"/>
    <property type="molecule type" value="mRNA"/>
</dbReference>
<dbReference type="CCDS" id="CCDS49309.1"/>
<dbReference type="RefSeq" id="NP_659086.2">
    <property type="nucleotide sequence ID" value="NM_144837.3"/>
</dbReference>
<dbReference type="SMR" id="E9Q286"/>
<dbReference type="BioGRID" id="230020">
    <property type="interactions" value="9"/>
</dbReference>
<dbReference type="FunCoup" id="E9Q286">
    <property type="interactions" value="3340"/>
</dbReference>
<dbReference type="IntAct" id="E9Q286">
    <property type="interactions" value="2"/>
</dbReference>
<dbReference type="STRING" id="10090.ENSMUSP00000036482"/>
<dbReference type="iPTMnet" id="E9Q286"/>
<dbReference type="PhosphoSitePlus" id="E9Q286"/>
<dbReference type="SwissPalm" id="E9Q286"/>
<dbReference type="jPOST" id="E9Q286"/>
<dbReference type="PaxDb" id="10090-ENSMUSP00000036482"/>
<dbReference type="PeptideAtlas" id="E9Q286"/>
<dbReference type="ProteomicsDB" id="269525"/>
<dbReference type="Pumba" id="E9Q286"/>
<dbReference type="Antibodypedia" id="64954">
    <property type="antibodies" value="42 antibodies from 9 providers"/>
</dbReference>
<dbReference type="Ensembl" id="ENSMUST00000043493.7">
    <property type="protein sequence ID" value="ENSMUSP00000036482.6"/>
    <property type="gene ID" value="ENSMUSG00000034525.8"/>
</dbReference>
<dbReference type="GeneID" id="218333"/>
<dbReference type="KEGG" id="mmu:218333"/>
<dbReference type="UCSC" id="uc007rcx.2">
    <property type="organism name" value="mouse"/>
</dbReference>
<dbReference type="AGR" id="MGI:2385865"/>
<dbReference type="CTD" id="23379"/>
<dbReference type="MGI" id="MGI:2385865">
    <property type="gene designation" value="Ice1"/>
</dbReference>
<dbReference type="VEuPathDB" id="HostDB:ENSMUSG00000034525"/>
<dbReference type="eggNOG" id="ENOG502QX8H">
    <property type="taxonomic scope" value="Eukaryota"/>
</dbReference>
<dbReference type="GeneTree" id="ENSGT00950000183199"/>
<dbReference type="HOGENOM" id="CLU_001630_0_0_1"/>
<dbReference type="InParanoid" id="E9Q286"/>
<dbReference type="OMA" id="YCYTGIR"/>
<dbReference type="OrthoDB" id="2238957at2759"/>
<dbReference type="TreeFam" id="TF330760"/>
<dbReference type="Reactome" id="R-MMU-6807505">
    <property type="pathway name" value="RNA polymerase II transcribes snRNA genes"/>
</dbReference>
<dbReference type="BioGRID-ORCS" id="218333">
    <property type="hits" value="22 hits in 82 CRISPR screens"/>
</dbReference>
<dbReference type="ChiTaRS" id="Ice1">
    <property type="organism name" value="mouse"/>
</dbReference>
<dbReference type="PRO" id="PR:E9Q286"/>
<dbReference type="Proteomes" id="UP000000589">
    <property type="component" value="Chromosome 13"/>
</dbReference>
<dbReference type="RNAct" id="E9Q286">
    <property type="molecule type" value="protein"/>
</dbReference>
<dbReference type="Bgee" id="ENSMUSG00000034525">
    <property type="expression patterns" value="Expressed in animal zygote and 255 other cell types or tissues"/>
</dbReference>
<dbReference type="ExpressionAtlas" id="E9Q286">
    <property type="expression patterns" value="baseline and differential"/>
</dbReference>
<dbReference type="GO" id="GO:0015030">
    <property type="term" value="C:Cajal body"/>
    <property type="evidence" value="ECO:0007669"/>
    <property type="project" value="UniProtKB-SubCell"/>
</dbReference>
<dbReference type="GO" id="GO:0000791">
    <property type="term" value="C:euchromatin"/>
    <property type="evidence" value="ECO:0007669"/>
    <property type="project" value="Ensembl"/>
</dbReference>
<dbReference type="GO" id="GO:0035363">
    <property type="term" value="C:histone locus body"/>
    <property type="evidence" value="ECO:0007669"/>
    <property type="project" value="Ensembl"/>
</dbReference>
<dbReference type="GO" id="GO:0008023">
    <property type="term" value="C:transcription elongation factor complex"/>
    <property type="evidence" value="ECO:0007669"/>
    <property type="project" value="Ensembl"/>
</dbReference>
<dbReference type="GO" id="GO:0030674">
    <property type="term" value="F:protein-macromolecule adaptor activity"/>
    <property type="evidence" value="ECO:0007669"/>
    <property type="project" value="Ensembl"/>
</dbReference>
<dbReference type="GO" id="GO:0090316">
    <property type="term" value="P:positive regulation of intracellular protein transport"/>
    <property type="evidence" value="ECO:0007669"/>
    <property type="project" value="Ensembl"/>
</dbReference>
<dbReference type="GO" id="GO:0031334">
    <property type="term" value="P:positive regulation of protein-containing complex assembly"/>
    <property type="evidence" value="ECO:0007669"/>
    <property type="project" value="Ensembl"/>
</dbReference>
<dbReference type="GO" id="GO:0045945">
    <property type="term" value="P:positive regulation of transcription by RNA polymerase III"/>
    <property type="evidence" value="ECO:0007669"/>
    <property type="project" value="Ensembl"/>
</dbReference>
<dbReference type="GO" id="GO:0042795">
    <property type="term" value="P:snRNA transcription by RNA polymerase II"/>
    <property type="evidence" value="ECO:0007669"/>
    <property type="project" value="Ensembl"/>
</dbReference>
<dbReference type="GO" id="GO:0042796">
    <property type="term" value="P:snRNA transcription by RNA polymerase III"/>
    <property type="evidence" value="ECO:0007669"/>
    <property type="project" value="Ensembl"/>
</dbReference>
<dbReference type="PANTHER" id="PTHR11852:SF4">
    <property type="entry name" value="LITTLE ELONGATION COMPLEX SUBUNIT 1"/>
    <property type="match status" value="1"/>
</dbReference>
<dbReference type="PANTHER" id="PTHR11852">
    <property type="entry name" value="PLATELET-ACTIVATING FACTOR ACETYLHYDROLASE"/>
    <property type="match status" value="1"/>
</dbReference>
<organism>
    <name type="scientific">Mus musculus</name>
    <name type="common">Mouse</name>
    <dbReference type="NCBI Taxonomy" id="10090"/>
    <lineage>
        <taxon>Eukaryota</taxon>
        <taxon>Metazoa</taxon>
        <taxon>Chordata</taxon>
        <taxon>Craniata</taxon>
        <taxon>Vertebrata</taxon>
        <taxon>Euteleostomi</taxon>
        <taxon>Mammalia</taxon>
        <taxon>Eutheria</taxon>
        <taxon>Euarchontoglires</taxon>
        <taxon>Glires</taxon>
        <taxon>Rodentia</taxon>
        <taxon>Myomorpha</taxon>
        <taxon>Muroidea</taxon>
        <taxon>Muridae</taxon>
        <taxon>Murinae</taxon>
        <taxon>Mus</taxon>
        <taxon>Mus</taxon>
    </lineage>
</organism>
<sequence length="2241" mass="242254">MMPGETHPAAPGPADLARCQGCASLQQNLNEYVEALIALKQKIINTDNLLTEYQKKCDELQFARRENSTLHHQVEQMLQKISPLQKCQEELGSLKAELEEKKSSLKLYQDTHQEYARVKEECLRTDAQKKKLEAKVKKLEEAAVKQTQDFKQLRNEKKILEKEFKKTQERLDEFSKQKNEKELRHIGTQISSDSHGSIDKRKVKVLLKELWLCVNTAHRLSGEGGRRIPEKPAKGSSAARASEQDELLPVQGGPARAADMRSFFSKLSMEMEGDFSSSESAEEELPSGASPSTEHAFCEERHSEVSGQRPDDGNRTNVYDHEHFFDDDLQAAIDFFKLPPPLLSPVPSPPPMASGSLPSSLAPESFFGEFTDSSDSDSVPPRDSMESALEDYTAESRAYFDLLEKIKRSDQYVKKPGSLEATQAVNSLTPLGFVTGRTALGEPSAAASLAQGRHWTESSEFVRDRGDSVEEAERMVEAREVDKSVQVGKGLLKHNRKLWLEMASRGPARKKEAGAGESEICFSSLGKRTFSELIESEGKTLSSKALCPSQSEFSKRTLTDGSASKSPCVTGSGRFQRRERDVRESTPQSGICAAAAGRGHSARLPSSSSATSVPVSVCSNHQTPWPGCVSVGTPAEGTCTEQKSPTRTLNTFLLRSEPTACFPKENDPENSLSTLSPKSKLGTSTFSDWKSRGLESFSTLKSTAKGHSLPQSVFPKPTGGGQCKGRGPGATLILPKSDWTSLARSQAGFTRRSSGSADSTSWHRSDVLRRGSGGSPRASSEYQQRTRLQLEKATPASQNSSLTAMHGPSGESTIPPESNAAAALLPNQVSVITKQARPRRVLGSSLEPWQPHGNTLSPAVNGGKETGLMPSVSACVGDGDPIAQVPEQIADKETPSPEVSVSWRNPICDSPSDSLLAENFSCSTDRKLPFSSEDNIFQCAMNEHLQQKPTKSPQTTQSGASRLEAGELLPSGVTSGVFPAEQVPHGPHHQADTEAPVVARESHSAPQNASAPPVVPSRGPLRARVPTVPVCPSSLSRAEEETQGTSQSSLPGASYCYTGIRERGEEDTEVEDEAVSCSEGEHEAEAVMGRRQQEQAEDSHRPLGDPEAGVGEAGHPSDVGDLTSALEECNLSTLLYIDKLSTSEVVMVLESCQLGDYSSRVSASECASKGSLSEEMNTELRQSEISRKKCGKRLWEEKLLRASEEWAESEGDDSCGRTSCQHAQCPLEVPSDVLTKTGEELDTNPVDCGGTDTEHALLESTHHSQAAEDLTEDALPEETSSPMPHTAELPDPSAVDGGGSSPLSSRSDPEHIQSSYEDEPNSGECLSIGEEGLAEPGELLTLSSDSSTPPRLEQSSDCVAETAFRYQISAVTSEVISVLINKDQDLVIEKGDNWTIISGVAISPGMEQVVLCDTLGDAASSQDQGGLDDGSMEKSPEASPSGPLPQEPPCGGDLSGAQEDISSNGQSANFDKSRLRNRPVKPSIWIRSQIYDQTLETEKVASDHTYYNWKLEPLGKNKPRSKISNKDQASKLAKTLVLNRGEVHLNEVPQPASGEGTNIKLPRSQAQPIMAGTDRSTPTNCSPDTLSKIRQEVGPPLPPLLPPLIATPPRSSQTLSPLVPNSGPSSRSSPAGHVSPLCEVPGPPVLSPWPEELQQASPLDPSPSPSTAAASGRIVSSPLQFCAATPKHALPVPGRLPSCAPGHAAVSGPQQENSVKILDTMYPELSARARTLSLLKGNMQLSRGSTVDGKVLPGRVSALLGLKAITSTSTAFVLTGGSSGADGSQGKSQDSGVQQDAGGKRTLAVSMLRSAKRLRLDNKSPEPDTREVTGEGVPEDPQGGSPLAEVVPAEEEQADVPVCSAASLLRVNPREMAESYNIAITRALRKIAESSFDLLPVIRSHVYVGNISKKPVMRDQEKEVVYEFSTTNKHLGEYLLRSILSELKIQKTSLDHSYIHALCRVYVGICRQLGDLERARLFCYSLLKEDFPESEKLTLFIANMWREVFLSQSAISEAMQLVARQRARGEVLNCLRAFLSWEKNAPIDVGIVVSKLLLTIQLCPKTEFQSSEEFGEDLSANIWEYIFAIDLLCCHQRWIWTHDNIISKELWPVMDKWIKYRKGHSNIAYTPDVIVASVLRLIGRLGQLGLKEGFPTAVKNISSVIGMFIQHAQDEDIPWGVQLAAVYALCDLSPSNPAEISKILEAWRTQTSNAIPSAIVHCLEEVGSLSADGSAGCTSKGDSAP</sequence>
<keyword id="KW-0007">Acetylation</keyword>
<keyword id="KW-0175">Coiled coil</keyword>
<keyword id="KW-0539">Nucleus</keyword>
<keyword id="KW-0597">Phosphoprotein</keyword>
<keyword id="KW-1185">Reference proteome</keyword>
<keyword id="KW-0804">Transcription</keyword>
<keyword id="KW-0805">Transcription regulation</keyword>